<feature type="chain" id="PRO_0000345708" description="tRNA modification GTPase MnmE">
    <location>
        <begin position="1"/>
        <end position="452"/>
    </location>
</feature>
<feature type="domain" description="TrmE-type G">
    <location>
        <begin position="220"/>
        <end position="378"/>
    </location>
</feature>
<feature type="binding site" evidence="1">
    <location>
        <position position="28"/>
    </location>
    <ligand>
        <name>(6S)-5-formyl-5,6,7,8-tetrahydrofolate</name>
        <dbReference type="ChEBI" id="CHEBI:57457"/>
    </ligand>
</feature>
<feature type="binding site" evidence="1">
    <location>
        <position position="85"/>
    </location>
    <ligand>
        <name>(6S)-5-formyl-5,6,7,8-tetrahydrofolate</name>
        <dbReference type="ChEBI" id="CHEBI:57457"/>
    </ligand>
</feature>
<feature type="binding site" evidence="1">
    <location>
        <position position="124"/>
    </location>
    <ligand>
        <name>(6S)-5-formyl-5,6,7,8-tetrahydrofolate</name>
        <dbReference type="ChEBI" id="CHEBI:57457"/>
    </ligand>
</feature>
<feature type="binding site" evidence="1">
    <location>
        <begin position="230"/>
        <end position="235"/>
    </location>
    <ligand>
        <name>GTP</name>
        <dbReference type="ChEBI" id="CHEBI:37565"/>
    </ligand>
</feature>
<feature type="binding site" evidence="1">
    <location>
        <position position="230"/>
    </location>
    <ligand>
        <name>K(+)</name>
        <dbReference type="ChEBI" id="CHEBI:29103"/>
    </ligand>
</feature>
<feature type="binding site" evidence="1">
    <location>
        <position position="234"/>
    </location>
    <ligand>
        <name>Mg(2+)</name>
        <dbReference type="ChEBI" id="CHEBI:18420"/>
    </ligand>
</feature>
<feature type="binding site" evidence="1">
    <location>
        <begin position="249"/>
        <end position="255"/>
    </location>
    <ligand>
        <name>GTP</name>
        <dbReference type="ChEBI" id="CHEBI:37565"/>
    </ligand>
</feature>
<feature type="binding site" evidence="1">
    <location>
        <position position="249"/>
    </location>
    <ligand>
        <name>K(+)</name>
        <dbReference type="ChEBI" id="CHEBI:29103"/>
    </ligand>
</feature>
<feature type="binding site" evidence="1">
    <location>
        <position position="251"/>
    </location>
    <ligand>
        <name>K(+)</name>
        <dbReference type="ChEBI" id="CHEBI:29103"/>
    </ligand>
</feature>
<feature type="binding site" evidence="1">
    <location>
        <position position="254"/>
    </location>
    <ligand>
        <name>K(+)</name>
        <dbReference type="ChEBI" id="CHEBI:29103"/>
    </ligand>
</feature>
<feature type="binding site" evidence="1">
    <location>
        <position position="255"/>
    </location>
    <ligand>
        <name>Mg(2+)</name>
        <dbReference type="ChEBI" id="CHEBI:18420"/>
    </ligand>
</feature>
<feature type="binding site" evidence="1">
    <location>
        <begin position="274"/>
        <end position="277"/>
    </location>
    <ligand>
        <name>GTP</name>
        <dbReference type="ChEBI" id="CHEBI:37565"/>
    </ligand>
</feature>
<feature type="binding site" evidence="1">
    <location>
        <begin position="359"/>
        <end position="361"/>
    </location>
    <ligand>
        <name>GTP</name>
        <dbReference type="ChEBI" id="CHEBI:37565"/>
    </ligand>
</feature>
<feature type="binding site" evidence="1">
    <location>
        <position position="452"/>
    </location>
    <ligand>
        <name>(6S)-5-formyl-5,6,7,8-tetrahydrofolate</name>
        <dbReference type="ChEBI" id="CHEBI:57457"/>
    </ligand>
</feature>
<organism>
    <name type="scientific">Azoarcus sp. (strain BH72)</name>
    <dbReference type="NCBI Taxonomy" id="418699"/>
    <lineage>
        <taxon>Bacteria</taxon>
        <taxon>Pseudomonadati</taxon>
        <taxon>Pseudomonadota</taxon>
        <taxon>Betaproteobacteria</taxon>
        <taxon>Rhodocyclales</taxon>
        <taxon>Zoogloeaceae</taxon>
        <taxon>Azoarcus</taxon>
    </lineage>
</organism>
<evidence type="ECO:0000255" key="1">
    <source>
        <dbReference type="HAMAP-Rule" id="MF_00379"/>
    </source>
</evidence>
<name>MNME_AZOSB</name>
<accession>A1KCP8</accession>
<keyword id="KW-0963">Cytoplasm</keyword>
<keyword id="KW-0342">GTP-binding</keyword>
<keyword id="KW-0378">Hydrolase</keyword>
<keyword id="KW-0460">Magnesium</keyword>
<keyword id="KW-0479">Metal-binding</keyword>
<keyword id="KW-0547">Nucleotide-binding</keyword>
<keyword id="KW-0630">Potassium</keyword>
<keyword id="KW-1185">Reference proteome</keyword>
<keyword id="KW-0819">tRNA processing</keyword>
<dbReference type="EC" id="3.6.-.-" evidence="1"/>
<dbReference type="EMBL" id="AM406670">
    <property type="protein sequence ID" value="CAL96604.1"/>
    <property type="molecule type" value="Genomic_DNA"/>
</dbReference>
<dbReference type="RefSeq" id="WP_011767710.1">
    <property type="nucleotide sequence ID" value="NC_008702.1"/>
</dbReference>
<dbReference type="SMR" id="A1KCP8"/>
<dbReference type="STRING" id="62928.azo3988"/>
<dbReference type="KEGG" id="aoa:dqs_4131"/>
<dbReference type="KEGG" id="azo:azo3988"/>
<dbReference type="eggNOG" id="COG0486">
    <property type="taxonomic scope" value="Bacteria"/>
</dbReference>
<dbReference type="HOGENOM" id="CLU_019624_4_1_4"/>
<dbReference type="OrthoDB" id="9805918at2"/>
<dbReference type="Proteomes" id="UP000002588">
    <property type="component" value="Chromosome"/>
</dbReference>
<dbReference type="GO" id="GO:0005829">
    <property type="term" value="C:cytosol"/>
    <property type="evidence" value="ECO:0007669"/>
    <property type="project" value="TreeGrafter"/>
</dbReference>
<dbReference type="GO" id="GO:0005525">
    <property type="term" value="F:GTP binding"/>
    <property type="evidence" value="ECO:0007669"/>
    <property type="project" value="UniProtKB-UniRule"/>
</dbReference>
<dbReference type="GO" id="GO:0003924">
    <property type="term" value="F:GTPase activity"/>
    <property type="evidence" value="ECO:0007669"/>
    <property type="project" value="UniProtKB-UniRule"/>
</dbReference>
<dbReference type="GO" id="GO:0046872">
    <property type="term" value="F:metal ion binding"/>
    <property type="evidence" value="ECO:0007669"/>
    <property type="project" value="UniProtKB-KW"/>
</dbReference>
<dbReference type="GO" id="GO:0030488">
    <property type="term" value="P:tRNA methylation"/>
    <property type="evidence" value="ECO:0007669"/>
    <property type="project" value="TreeGrafter"/>
</dbReference>
<dbReference type="GO" id="GO:0002098">
    <property type="term" value="P:tRNA wobble uridine modification"/>
    <property type="evidence" value="ECO:0007669"/>
    <property type="project" value="TreeGrafter"/>
</dbReference>
<dbReference type="CDD" id="cd04164">
    <property type="entry name" value="trmE"/>
    <property type="match status" value="1"/>
</dbReference>
<dbReference type="CDD" id="cd14858">
    <property type="entry name" value="TrmE_N"/>
    <property type="match status" value="1"/>
</dbReference>
<dbReference type="Gene3D" id="3.40.50.300">
    <property type="entry name" value="P-loop containing nucleotide triphosphate hydrolases"/>
    <property type="match status" value="1"/>
</dbReference>
<dbReference type="Gene3D" id="3.30.1360.120">
    <property type="entry name" value="Probable tRNA modification gtpase trme, domain 1"/>
    <property type="match status" value="1"/>
</dbReference>
<dbReference type="Gene3D" id="1.20.120.430">
    <property type="entry name" value="tRNA modification GTPase MnmE domain 2"/>
    <property type="match status" value="1"/>
</dbReference>
<dbReference type="HAMAP" id="MF_00379">
    <property type="entry name" value="GTPase_MnmE"/>
    <property type="match status" value="1"/>
</dbReference>
<dbReference type="InterPro" id="IPR031168">
    <property type="entry name" value="G_TrmE"/>
</dbReference>
<dbReference type="InterPro" id="IPR006073">
    <property type="entry name" value="GTP-bd"/>
</dbReference>
<dbReference type="InterPro" id="IPR018948">
    <property type="entry name" value="GTP-bd_TrmE_N"/>
</dbReference>
<dbReference type="InterPro" id="IPR004520">
    <property type="entry name" value="GTPase_MnmE"/>
</dbReference>
<dbReference type="InterPro" id="IPR027368">
    <property type="entry name" value="MnmE_dom2"/>
</dbReference>
<dbReference type="InterPro" id="IPR025867">
    <property type="entry name" value="MnmE_helical"/>
</dbReference>
<dbReference type="InterPro" id="IPR027417">
    <property type="entry name" value="P-loop_NTPase"/>
</dbReference>
<dbReference type="InterPro" id="IPR005225">
    <property type="entry name" value="Small_GTP-bd"/>
</dbReference>
<dbReference type="InterPro" id="IPR027266">
    <property type="entry name" value="TrmE/GcvT_dom1"/>
</dbReference>
<dbReference type="NCBIfam" id="TIGR00450">
    <property type="entry name" value="mnmE_trmE_thdF"/>
    <property type="match status" value="1"/>
</dbReference>
<dbReference type="NCBIfam" id="NF003661">
    <property type="entry name" value="PRK05291.1-3"/>
    <property type="match status" value="1"/>
</dbReference>
<dbReference type="NCBIfam" id="TIGR00231">
    <property type="entry name" value="small_GTP"/>
    <property type="match status" value="1"/>
</dbReference>
<dbReference type="PANTHER" id="PTHR42714">
    <property type="entry name" value="TRNA MODIFICATION GTPASE GTPBP3"/>
    <property type="match status" value="1"/>
</dbReference>
<dbReference type="PANTHER" id="PTHR42714:SF2">
    <property type="entry name" value="TRNA MODIFICATION GTPASE GTPBP3, MITOCHONDRIAL"/>
    <property type="match status" value="1"/>
</dbReference>
<dbReference type="Pfam" id="PF01926">
    <property type="entry name" value="MMR_HSR1"/>
    <property type="match status" value="1"/>
</dbReference>
<dbReference type="Pfam" id="PF12631">
    <property type="entry name" value="MnmE_helical"/>
    <property type="match status" value="1"/>
</dbReference>
<dbReference type="Pfam" id="PF10396">
    <property type="entry name" value="TrmE_N"/>
    <property type="match status" value="1"/>
</dbReference>
<dbReference type="PRINTS" id="PR00326">
    <property type="entry name" value="GTP1OBG"/>
</dbReference>
<dbReference type="SUPFAM" id="SSF52540">
    <property type="entry name" value="P-loop containing nucleoside triphosphate hydrolases"/>
    <property type="match status" value="1"/>
</dbReference>
<dbReference type="SUPFAM" id="SSF116878">
    <property type="entry name" value="TrmE connector domain"/>
    <property type="match status" value="1"/>
</dbReference>
<dbReference type="PROSITE" id="PS51709">
    <property type="entry name" value="G_TRME"/>
    <property type="match status" value="1"/>
</dbReference>
<reference key="1">
    <citation type="journal article" date="2006" name="Nat. Biotechnol.">
        <title>Complete genome of the mutualistic, N2-fixing grass endophyte Azoarcus sp. strain BH72.</title>
        <authorList>
            <person name="Krause A."/>
            <person name="Ramakumar A."/>
            <person name="Bartels D."/>
            <person name="Battistoni F."/>
            <person name="Bekel T."/>
            <person name="Boch J."/>
            <person name="Boehm M."/>
            <person name="Friedrich F."/>
            <person name="Hurek T."/>
            <person name="Krause L."/>
            <person name="Linke B."/>
            <person name="McHardy A.C."/>
            <person name="Sarkar A."/>
            <person name="Schneiker S."/>
            <person name="Syed A.A."/>
            <person name="Thauer R."/>
            <person name="Vorhoelter F.-J."/>
            <person name="Weidner S."/>
            <person name="Puehler A."/>
            <person name="Reinhold-Hurek B."/>
            <person name="Kaiser O."/>
            <person name="Goesmann A."/>
        </authorList>
    </citation>
    <scope>NUCLEOTIDE SEQUENCE [LARGE SCALE GENOMIC DNA]</scope>
    <source>
        <strain>BH72</strain>
    </source>
</reference>
<protein>
    <recommendedName>
        <fullName evidence="1">tRNA modification GTPase MnmE</fullName>
        <ecNumber evidence="1">3.6.-.-</ecNumber>
    </recommendedName>
</protein>
<comment type="function">
    <text evidence="1">Exhibits a very high intrinsic GTPase hydrolysis rate. Involved in the addition of a carboxymethylaminomethyl (cmnm) group at the wobble position (U34) of certain tRNAs, forming tRNA-cmnm(5)s(2)U34.</text>
</comment>
<comment type="cofactor">
    <cofactor evidence="1">
        <name>K(+)</name>
        <dbReference type="ChEBI" id="CHEBI:29103"/>
    </cofactor>
    <text evidence="1">Binds 1 potassium ion per subunit.</text>
</comment>
<comment type="subunit">
    <text evidence="1">Homodimer. Heterotetramer of two MnmE and two MnmG subunits.</text>
</comment>
<comment type="subcellular location">
    <subcellularLocation>
        <location evidence="1">Cytoplasm</location>
    </subcellularLocation>
</comment>
<comment type="similarity">
    <text evidence="1">Belongs to the TRAFAC class TrmE-Era-EngA-EngB-Septin-like GTPase superfamily. TrmE GTPase family.</text>
</comment>
<sequence length="452" mass="48200">MASKAPRPPEAIAAIATAPGRGGIGVVRVSGAGLTGFAQQLCGREPQPRLATLARFRDADGATIDEGILLYFPAPASFTGEDVLELQGHGGPVVMQMLLARCLALGARLAEPGEFTRRAFLNGKLDLAQAEAVADLIEASTAAAARSALRSLSGQFSEEVLRIRDALIDLRMLVEATIDFPEEEVEFLDKGRALPRLAAIRTQLDALLDRARQGALLRTGMNVVLVGRPNVGKSSLLNQLAGEDRAIVTDVAGTTRDALREAIQIEGIPLHVIDTAGLRQTSDVVERIGIERTWREVERADVVLRVIDSEGAEEDALEAELAARCPSAAARITVVNKIDLLGLAPERTETAGAVRLRLSARSGDGVDLLRTELLRAAGWHAHGEDVVLARERHLLALREALDHLAAAEAAASALELFAEELRLAQEALAGITGEFSADDLLGEIFSRFCIGK</sequence>
<gene>
    <name evidence="1" type="primary">mnmE</name>
    <name evidence="1" type="synonym">trmE</name>
    <name type="ordered locus">azo3988</name>
</gene>
<proteinExistence type="inferred from homology"/>